<proteinExistence type="inferred from homology"/>
<sequence length="150" mass="16782">MSDSVELFTDGACKGNPGPGGWGALLVCKGVEKELWGGEANTTNNRMELTGAIRGLEELKRPCEVTLVTDSQYVMKGITEWMVNWKKRGWKTAAKEPVKNADLWQLLDEQVSRHTVKWQWVRGHIGHPGNERADQLANRGVDEVRGIKRA</sequence>
<organism>
    <name type="scientific">Pseudomonas syringae pv. tomato (strain ATCC BAA-871 / DC3000)</name>
    <dbReference type="NCBI Taxonomy" id="223283"/>
    <lineage>
        <taxon>Bacteria</taxon>
        <taxon>Pseudomonadati</taxon>
        <taxon>Pseudomonadota</taxon>
        <taxon>Gammaproteobacteria</taxon>
        <taxon>Pseudomonadales</taxon>
        <taxon>Pseudomonadaceae</taxon>
        <taxon>Pseudomonas</taxon>
    </lineage>
</organism>
<gene>
    <name evidence="1" type="primary">rnhA</name>
    <name type="ordered locus">PSPTO_3712</name>
</gene>
<protein>
    <recommendedName>
        <fullName evidence="1">Ribonuclease HI</fullName>
        <shortName evidence="1">RNase HI</shortName>
        <ecNumber evidence="1">3.1.26.4</ecNumber>
    </recommendedName>
</protein>
<evidence type="ECO:0000255" key="1">
    <source>
        <dbReference type="HAMAP-Rule" id="MF_00042"/>
    </source>
</evidence>
<evidence type="ECO:0000255" key="2">
    <source>
        <dbReference type="PROSITE-ProRule" id="PRU00408"/>
    </source>
</evidence>
<dbReference type="EC" id="3.1.26.4" evidence="1"/>
<dbReference type="EMBL" id="AE016853">
    <property type="protein sequence ID" value="AAO57181.1"/>
    <property type="molecule type" value="Genomic_DNA"/>
</dbReference>
<dbReference type="RefSeq" id="NP_793486.1">
    <property type="nucleotide sequence ID" value="NC_004578.1"/>
</dbReference>
<dbReference type="RefSeq" id="WP_005770770.1">
    <property type="nucleotide sequence ID" value="NC_004578.1"/>
</dbReference>
<dbReference type="SMR" id="Q87YT0"/>
<dbReference type="STRING" id="223283.PSPTO_3712"/>
<dbReference type="GeneID" id="1185377"/>
<dbReference type="KEGG" id="pst:PSPTO_3712"/>
<dbReference type="PATRIC" id="fig|223283.9.peg.3804"/>
<dbReference type="eggNOG" id="COG0328">
    <property type="taxonomic scope" value="Bacteria"/>
</dbReference>
<dbReference type="HOGENOM" id="CLU_030894_6_0_6"/>
<dbReference type="OrthoDB" id="7845843at2"/>
<dbReference type="PhylomeDB" id="Q87YT0"/>
<dbReference type="Proteomes" id="UP000002515">
    <property type="component" value="Chromosome"/>
</dbReference>
<dbReference type="GO" id="GO:0005737">
    <property type="term" value="C:cytoplasm"/>
    <property type="evidence" value="ECO:0007669"/>
    <property type="project" value="UniProtKB-SubCell"/>
</dbReference>
<dbReference type="GO" id="GO:0000287">
    <property type="term" value="F:magnesium ion binding"/>
    <property type="evidence" value="ECO:0007669"/>
    <property type="project" value="UniProtKB-UniRule"/>
</dbReference>
<dbReference type="GO" id="GO:0003676">
    <property type="term" value="F:nucleic acid binding"/>
    <property type="evidence" value="ECO:0007669"/>
    <property type="project" value="InterPro"/>
</dbReference>
<dbReference type="GO" id="GO:0004523">
    <property type="term" value="F:RNA-DNA hybrid ribonuclease activity"/>
    <property type="evidence" value="ECO:0007669"/>
    <property type="project" value="UniProtKB-UniRule"/>
</dbReference>
<dbReference type="GO" id="GO:0043137">
    <property type="term" value="P:DNA replication, removal of RNA primer"/>
    <property type="evidence" value="ECO:0007669"/>
    <property type="project" value="TreeGrafter"/>
</dbReference>
<dbReference type="CDD" id="cd09278">
    <property type="entry name" value="RNase_HI_prokaryote_like"/>
    <property type="match status" value="1"/>
</dbReference>
<dbReference type="FunFam" id="3.30.420.10:FF:000089">
    <property type="entry name" value="Ribonuclease H"/>
    <property type="match status" value="1"/>
</dbReference>
<dbReference type="Gene3D" id="3.30.420.10">
    <property type="entry name" value="Ribonuclease H-like superfamily/Ribonuclease H"/>
    <property type="match status" value="1"/>
</dbReference>
<dbReference type="HAMAP" id="MF_00042">
    <property type="entry name" value="RNase_H"/>
    <property type="match status" value="1"/>
</dbReference>
<dbReference type="InterPro" id="IPR050092">
    <property type="entry name" value="RNase_H"/>
</dbReference>
<dbReference type="InterPro" id="IPR012337">
    <property type="entry name" value="RNaseH-like_sf"/>
</dbReference>
<dbReference type="InterPro" id="IPR002156">
    <property type="entry name" value="RNaseH_domain"/>
</dbReference>
<dbReference type="InterPro" id="IPR036397">
    <property type="entry name" value="RNaseH_sf"/>
</dbReference>
<dbReference type="InterPro" id="IPR022892">
    <property type="entry name" value="RNaseHI"/>
</dbReference>
<dbReference type="NCBIfam" id="NF001236">
    <property type="entry name" value="PRK00203.1"/>
    <property type="match status" value="1"/>
</dbReference>
<dbReference type="PANTHER" id="PTHR10642">
    <property type="entry name" value="RIBONUCLEASE H1"/>
    <property type="match status" value="1"/>
</dbReference>
<dbReference type="PANTHER" id="PTHR10642:SF26">
    <property type="entry name" value="RIBONUCLEASE H1"/>
    <property type="match status" value="1"/>
</dbReference>
<dbReference type="Pfam" id="PF00075">
    <property type="entry name" value="RNase_H"/>
    <property type="match status" value="1"/>
</dbReference>
<dbReference type="SUPFAM" id="SSF53098">
    <property type="entry name" value="Ribonuclease H-like"/>
    <property type="match status" value="1"/>
</dbReference>
<dbReference type="PROSITE" id="PS50879">
    <property type="entry name" value="RNASE_H_1"/>
    <property type="match status" value="1"/>
</dbReference>
<keyword id="KW-0963">Cytoplasm</keyword>
<keyword id="KW-0255">Endonuclease</keyword>
<keyword id="KW-0378">Hydrolase</keyword>
<keyword id="KW-0460">Magnesium</keyword>
<keyword id="KW-0479">Metal-binding</keyword>
<keyword id="KW-0540">Nuclease</keyword>
<keyword id="KW-1185">Reference proteome</keyword>
<accession>Q87YT0</accession>
<feature type="chain" id="PRO_0000195391" description="Ribonuclease HI">
    <location>
        <begin position="1"/>
        <end position="150"/>
    </location>
</feature>
<feature type="domain" description="RNase H type-1" evidence="2">
    <location>
        <begin position="1"/>
        <end position="142"/>
    </location>
</feature>
<feature type="binding site" evidence="1">
    <location>
        <position position="10"/>
    </location>
    <ligand>
        <name>Mg(2+)</name>
        <dbReference type="ChEBI" id="CHEBI:18420"/>
        <label>1</label>
    </ligand>
</feature>
<feature type="binding site" evidence="1">
    <location>
        <position position="10"/>
    </location>
    <ligand>
        <name>Mg(2+)</name>
        <dbReference type="ChEBI" id="CHEBI:18420"/>
        <label>2</label>
    </ligand>
</feature>
<feature type="binding site" evidence="1">
    <location>
        <position position="48"/>
    </location>
    <ligand>
        <name>Mg(2+)</name>
        <dbReference type="ChEBI" id="CHEBI:18420"/>
        <label>1</label>
    </ligand>
</feature>
<feature type="binding site" evidence="1">
    <location>
        <position position="70"/>
    </location>
    <ligand>
        <name>Mg(2+)</name>
        <dbReference type="ChEBI" id="CHEBI:18420"/>
        <label>1</label>
    </ligand>
</feature>
<feature type="binding site" evidence="1">
    <location>
        <position position="134"/>
    </location>
    <ligand>
        <name>Mg(2+)</name>
        <dbReference type="ChEBI" id="CHEBI:18420"/>
        <label>2</label>
    </ligand>
</feature>
<name>RNH_PSESM</name>
<comment type="function">
    <text evidence="1">Endonuclease that specifically degrades the RNA of RNA-DNA hybrids.</text>
</comment>
<comment type="catalytic activity">
    <reaction evidence="1">
        <text>Endonucleolytic cleavage to 5'-phosphomonoester.</text>
        <dbReference type="EC" id="3.1.26.4"/>
    </reaction>
</comment>
<comment type="cofactor">
    <cofactor evidence="1">
        <name>Mg(2+)</name>
        <dbReference type="ChEBI" id="CHEBI:18420"/>
    </cofactor>
    <text evidence="1">Binds 1 Mg(2+) ion per subunit. May bind a second metal ion at a regulatory site, or after substrate binding.</text>
</comment>
<comment type="subunit">
    <text evidence="1">Monomer.</text>
</comment>
<comment type="subcellular location">
    <subcellularLocation>
        <location evidence="1">Cytoplasm</location>
    </subcellularLocation>
</comment>
<comment type="similarity">
    <text evidence="1">Belongs to the RNase H family.</text>
</comment>
<reference key="1">
    <citation type="journal article" date="2003" name="Proc. Natl. Acad. Sci. U.S.A.">
        <title>The complete genome sequence of the Arabidopsis and tomato pathogen Pseudomonas syringae pv. tomato DC3000.</title>
        <authorList>
            <person name="Buell C.R."/>
            <person name="Joardar V."/>
            <person name="Lindeberg M."/>
            <person name="Selengut J."/>
            <person name="Paulsen I.T."/>
            <person name="Gwinn M.L."/>
            <person name="Dodson R.J."/>
            <person name="DeBoy R.T."/>
            <person name="Durkin A.S."/>
            <person name="Kolonay J.F."/>
            <person name="Madupu R."/>
            <person name="Daugherty S.C."/>
            <person name="Brinkac L.M."/>
            <person name="Beanan M.J."/>
            <person name="Haft D.H."/>
            <person name="Nelson W.C."/>
            <person name="Davidsen T.M."/>
            <person name="Zafar N."/>
            <person name="Zhou L."/>
            <person name="Liu J."/>
            <person name="Yuan Q."/>
            <person name="Khouri H.M."/>
            <person name="Fedorova N.B."/>
            <person name="Tran B."/>
            <person name="Russell D."/>
            <person name="Berry K.J."/>
            <person name="Utterback T.R."/>
            <person name="Van Aken S.E."/>
            <person name="Feldblyum T.V."/>
            <person name="D'Ascenzo M."/>
            <person name="Deng W.-L."/>
            <person name="Ramos A.R."/>
            <person name="Alfano J.R."/>
            <person name="Cartinhour S."/>
            <person name="Chatterjee A.K."/>
            <person name="Delaney T.P."/>
            <person name="Lazarowitz S.G."/>
            <person name="Martin G.B."/>
            <person name="Schneider D.J."/>
            <person name="Tang X."/>
            <person name="Bender C.L."/>
            <person name="White O."/>
            <person name="Fraser C.M."/>
            <person name="Collmer A."/>
        </authorList>
    </citation>
    <scope>NUCLEOTIDE SEQUENCE [LARGE SCALE GENOMIC DNA]</scope>
    <source>
        <strain>ATCC BAA-871 / DC3000</strain>
    </source>
</reference>